<proteinExistence type="inferred from homology"/>
<keyword id="KW-1003">Cell membrane</keyword>
<keyword id="KW-0297">G-protein coupled receptor</keyword>
<keyword id="KW-0325">Glycoprotein</keyword>
<keyword id="KW-0472">Membrane</keyword>
<keyword id="KW-0675">Receptor</keyword>
<keyword id="KW-1185">Reference proteome</keyword>
<keyword id="KW-0807">Transducer</keyword>
<keyword id="KW-0812">Transmembrane</keyword>
<keyword id="KW-1133">Transmembrane helix</keyword>
<evidence type="ECO:0000255" key="1"/>
<evidence type="ECO:0000255" key="2">
    <source>
        <dbReference type="PROSITE-ProRule" id="PRU00521"/>
    </source>
</evidence>
<evidence type="ECO:0000256" key="3">
    <source>
        <dbReference type="SAM" id="MobiDB-lite"/>
    </source>
</evidence>
<evidence type="ECO:0000305" key="4"/>
<evidence type="ECO:0000312" key="5">
    <source>
        <dbReference type="WormBase" id="C56G3.1a"/>
    </source>
</evidence>
<sequence length="490" mass="56243">MEVKDIDNYCDRGISPNASNYLTYPFDGLCLQKFFYQLQTSLRRFTPYEEIIYTTVYIIISVAAVIGNGLVIMAVVRKKTMRTNRNVLILNLALSNLILAITNIPFLWLPSIDFEFPYSRFFCKFANVLPGSNIYCSTLTISVMAIDRYYSVKKLKIASNRKQCFHAVLVSLAIWIVSFILSLPLLLYYETSMLYVMREIRVVDQSGQEVIRSYGWRQCRLVSAGRLPDITQSIQLLMSILQVAFLYIVPLFVLSIFNVKLTRFLKTNANKMSKTRAPPKRFDRSDSHHNSLKNNNNHTSSLRSPSMPSIRSSITERNKTNQRTNRTTSLLIAMAGSYAALWFPFTLITFLIDFELIINQDYVNLVERIDQTCKMVSMLSICVNPFLYGFLNTNFRHEFSDIYYRYIRCETKSQPAGRFHHDVSSIAHHRQDSVYNDEATLLTTGRQSNGKDGSSSPIGFRSSVRVCSGQTKMIGDRIVLDDDIEKDSFV</sequence>
<name>NPR8_CAEEL</name>
<organism>
    <name type="scientific">Caenorhabditis elegans</name>
    <dbReference type="NCBI Taxonomy" id="6239"/>
    <lineage>
        <taxon>Eukaryota</taxon>
        <taxon>Metazoa</taxon>
        <taxon>Ecdysozoa</taxon>
        <taxon>Nematoda</taxon>
        <taxon>Chromadorea</taxon>
        <taxon>Rhabditida</taxon>
        <taxon>Rhabditina</taxon>
        <taxon>Rhabditomorpha</taxon>
        <taxon>Rhabditoidea</taxon>
        <taxon>Rhabditidae</taxon>
        <taxon>Peloderinae</taxon>
        <taxon>Caenorhabditis</taxon>
    </lineage>
</organism>
<reference key="1">
    <citation type="journal article" date="1998" name="Science">
        <title>Genome sequence of the nematode C. elegans: a platform for investigating biology.</title>
        <authorList>
            <consortium name="The C. elegans sequencing consortium"/>
        </authorList>
    </citation>
    <scope>NUCLEOTIDE SEQUENCE [LARGE SCALE GENOMIC DNA]</scope>
    <source>
        <strain>Bristol N2</strain>
    </source>
</reference>
<comment type="function">
    <text>Not known. Putative receptor.</text>
</comment>
<comment type="subcellular location">
    <subcellularLocation>
        <location evidence="4">Cell membrane</location>
        <topology evidence="4">Multi-pass membrane protein</topology>
    </subcellularLocation>
</comment>
<comment type="similarity">
    <text evidence="2">Belongs to the G-protein coupled receptor 1 family.</text>
</comment>
<gene>
    <name evidence="5" type="primary">npr-8</name>
    <name evidence="5" type="ORF">C56G3.1</name>
</gene>
<protein>
    <recommendedName>
        <fullName evidence="5">Probable G-protein coupled receptor npr-8</fullName>
    </recommendedName>
</protein>
<accession>Q18904</accession>
<feature type="chain" id="PRO_0000070239" description="Probable G-protein coupled receptor npr-8" evidence="4">
    <location>
        <begin position="1"/>
        <end position="490"/>
    </location>
</feature>
<feature type="topological domain" description="Extracellular" evidence="1">
    <location>
        <begin position="1"/>
        <end position="55"/>
    </location>
</feature>
<feature type="transmembrane region" description="Helical; Name=1" evidence="1">
    <location>
        <begin position="56"/>
        <end position="76"/>
    </location>
</feature>
<feature type="topological domain" description="Cytoplasmic" evidence="1">
    <location>
        <begin position="77"/>
        <end position="86"/>
    </location>
</feature>
<feature type="transmembrane region" description="Helical; Name=2" evidence="1">
    <location>
        <begin position="87"/>
        <end position="107"/>
    </location>
</feature>
<feature type="topological domain" description="Extracellular" evidence="1">
    <location>
        <begin position="108"/>
        <end position="125"/>
    </location>
</feature>
<feature type="transmembrane region" description="Helical; Name=3" evidence="1">
    <location>
        <begin position="126"/>
        <end position="146"/>
    </location>
</feature>
<feature type="topological domain" description="Cytoplasmic" evidence="1">
    <location>
        <begin position="147"/>
        <end position="166"/>
    </location>
</feature>
<feature type="transmembrane region" description="Helical; Name=4" evidence="1">
    <location>
        <begin position="167"/>
        <end position="187"/>
    </location>
</feature>
<feature type="topological domain" description="Extracellular" evidence="1">
    <location>
        <begin position="188"/>
        <end position="236"/>
    </location>
</feature>
<feature type="transmembrane region" description="Helical; Name=5" evidence="1">
    <location>
        <begin position="237"/>
        <end position="257"/>
    </location>
</feature>
<feature type="topological domain" description="Cytoplasmic" evidence="1">
    <location>
        <begin position="258"/>
        <end position="331"/>
    </location>
</feature>
<feature type="transmembrane region" description="Helical; Name=6" evidence="1">
    <location>
        <begin position="332"/>
        <end position="352"/>
    </location>
</feature>
<feature type="topological domain" description="Extracellular" evidence="1">
    <location>
        <begin position="353"/>
        <end position="374"/>
    </location>
</feature>
<feature type="transmembrane region" description="Helical; Name=7" evidence="1">
    <location>
        <begin position="375"/>
        <end position="395"/>
    </location>
</feature>
<feature type="topological domain" description="Cytoplasmic" evidence="1">
    <location>
        <begin position="396"/>
        <end position="490"/>
    </location>
</feature>
<feature type="region of interest" description="Disordered" evidence="3">
    <location>
        <begin position="272"/>
        <end position="322"/>
    </location>
</feature>
<feature type="compositionally biased region" description="Basic and acidic residues" evidence="3">
    <location>
        <begin position="280"/>
        <end position="289"/>
    </location>
</feature>
<feature type="compositionally biased region" description="Low complexity" evidence="3">
    <location>
        <begin position="292"/>
        <end position="313"/>
    </location>
</feature>
<feature type="glycosylation site" description="N-linked (GlcNAc...) asparagine" evidence="1">
    <location>
        <position position="17"/>
    </location>
</feature>
<dbReference type="EMBL" id="FO080413">
    <property type="protein sequence ID" value="CCD63510.1"/>
    <property type="molecule type" value="Genomic_DNA"/>
</dbReference>
<dbReference type="PIR" id="T15875">
    <property type="entry name" value="T15875"/>
</dbReference>
<dbReference type="RefSeq" id="NP_001367458.1">
    <property type="nucleotide sequence ID" value="NM_001381023.2"/>
</dbReference>
<dbReference type="RefSeq" id="NP_741835.1">
    <property type="nucleotide sequence ID" value="NM_171724.4"/>
</dbReference>
<dbReference type="SMR" id="Q18904"/>
<dbReference type="BioGRID" id="48677">
    <property type="interactions" value="1"/>
</dbReference>
<dbReference type="FunCoup" id="Q18904">
    <property type="interactions" value="3"/>
</dbReference>
<dbReference type="STRING" id="6239.C56G3.1b.1"/>
<dbReference type="GlyCosmos" id="Q18904">
    <property type="glycosylation" value="1 site, No reported glycans"/>
</dbReference>
<dbReference type="PaxDb" id="6239-C56G3.1b"/>
<dbReference type="EnsemblMetazoa" id="C56G3.1a.1">
    <property type="protein sequence ID" value="C56G3.1a.1"/>
    <property type="gene ID" value="WBGene00016984"/>
</dbReference>
<dbReference type="EnsemblMetazoa" id="C56G3.1a.2">
    <property type="protein sequence ID" value="C56G3.1a.2"/>
    <property type="gene ID" value="WBGene00016984"/>
</dbReference>
<dbReference type="GeneID" id="183869"/>
<dbReference type="UCSC" id="C56G3.1a.2">
    <property type="organism name" value="c. elegans"/>
</dbReference>
<dbReference type="AGR" id="WB:WBGene00016984"/>
<dbReference type="WormBase" id="C56G3.1a">
    <property type="protein sequence ID" value="CE04283"/>
    <property type="gene ID" value="WBGene00016984"/>
    <property type="gene designation" value="npr-8"/>
</dbReference>
<dbReference type="eggNOG" id="KOG3656">
    <property type="taxonomic scope" value="Eukaryota"/>
</dbReference>
<dbReference type="GeneTree" id="ENSGT00940000168939"/>
<dbReference type="HOGENOM" id="CLU_579001_0_0_1"/>
<dbReference type="InParanoid" id="Q18904"/>
<dbReference type="OrthoDB" id="9046662at2759"/>
<dbReference type="PRO" id="PR:Q18904"/>
<dbReference type="Proteomes" id="UP000001940">
    <property type="component" value="Chromosome X"/>
</dbReference>
<dbReference type="Bgee" id="WBGene00016984">
    <property type="expression patterns" value="Expressed in larva and 3 other cell types or tissues"/>
</dbReference>
<dbReference type="ExpressionAtlas" id="Q18904">
    <property type="expression patterns" value="baseline and differential"/>
</dbReference>
<dbReference type="GO" id="GO:0005886">
    <property type="term" value="C:plasma membrane"/>
    <property type="evidence" value="ECO:0007669"/>
    <property type="project" value="UniProtKB-SubCell"/>
</dbReference>
<dbReference type="GO" id="GO:0004983">
    <property type="term" value="F:neuropeptide Y receptor activity"/>
    <property type="evidence" value="ECO:0007669"/>
    <property type="project" value="InterPro"/>
</dbReference>
<dbReference type="CDD" id="cd15203">
    <property type="entry name" value="7tmA_NPYR-like"/>
    <property type="match status" value="1"/>
</dbReference>
<dbReference type="Gene3D" id="1.20.1070.10">
    <property type="entry name" value="Rhodopsin 7-helix transmembrane proteins"/>
    <property type="match status" value="1"/>
</dbReference>
<dbReference type="InterPro" id="IPR000276">
    <property type="entry name" value="GPCR_Rhodpsn"/>
</dbReference>
<dbReference type="InterPro" id="IPR017452">
    <property type="entry name" value="GPCR_Rhodpsn_7TM"/>
</dbReference>
<dbReference type="InterPro" id="IPR000611">
    <property type="entry name" value="NPY_rcpt"/>
</dbReference>
<dbReference type="PANTHER" id="PTHR24235:SF3">
    <property type="entry name" value="G-PROTEIN COUPLED RECEPTOR NPR-8-RELATED"/>
    <property type="match status" value="1"/>
</dbReference>
<dbReference type="PANTHER" id="PTHR24235">
    <property type="entry name" value="NEUROPEPTIDE Y RECEPTOR"/>
    <property type="match status" value="1"/>
</dbReference>
<dbReference type="Pfam" id="PF00001">
    <property type="entry name" value="7tm_1"/>
    <property type="match status" value="1"/>
</dbReference>
<dbReference type="PRINTS" id="PR00237">
    <property type="entry name" value="GPCRRHODOPSN"/>
</dbReference>
<dbReference type="PRINTS" id="PR01012">
    <property type="entry name" value="NRPEPTIDEYR"/>
</dbReference>
<dbReference type="SMART" id="SM01381">
    <property type="entry name" value="7TM_GPCR_Srsx"/>
    <property type="match status" value="1"/>
</dbReference>
<dbReference type="SUPFAM" id="SSF81321">
    <property type="entry name" value="Family A G protein-coupled receptor-like"/>
    <property type="match status" value="1"/>
</dbReference>
<dbReference type="PROSITE" id="PS00237">
    <property type="entry name" value="G_PROTEIN_RECEP_F1_1"/>
    <property type="match status" value="1"/>
</dbReference>
<dbReference type="PROSITE" id="PS50262">
    <property type="entry name" value="G_PROTEIN_RECEP_F1_2"/>
    <property type="match status" value="1"/>
</dbReference>